<keyword id="KW-0456">Lyase</keyword>
<keyword id="KW-0460">Magnesium</keyword>
<keyword id="KW-0464">Manganese</keyword>
<keyword id="KW-0479">Metal-binding</keyword>
<comment type="function">
    <text evidence="2">Sesquiterpene synthase involved in the biosynthesis of alpha-isocomene as the major product and detectable amounts of beta-caryophyllene, beta-isocomene, silphinene and modeph-2-ene. Produces exclusively the (-)-(E)-beta caryophyllene enantiomer.</text>
</comment>
<comment type="catalytic activity">
    <reaction evidence="2">
        <text>(2E,6E)-farnesyl diphosphate = (-)-alpha-isocomene + diphosphate</text>
        <dbReference type="Rhea" id="RHEA:34699"/>
        <dbReference type="ChEBI" id="CHEBI:33019"/>
        <dbReference type="ChEBI" id="CHEBI:68666"/>
        <dbReference type="ChEBI" id="CHEBI:175763"/>
        <dbReference type="EC" id="4.2.3.136"/>
    </reaction>
</comment>
<comment type="cofactor">
    <cofactor evidence="1">
        <name>Mg(2+)</name>
        <dbReference type="ChEBI" id="CHEBI:18420"/>
    </cofactor>
    <cofactor evidence="1">
        <name>Mn(2+)</name>
        <dbReference type="ChEBI" id="CHEBI:29035"/>
    </cofactor>
    <text evidence="1">Binds 3 Mg(2+) or Mn(2+) ions per subunit.</text>
</comment>
<comment type="pathway">
    <text>Secondary metabolite biosynthesis; terpenoid biosynthesis.</text>
</comment>
<comment type="tissue specificity">
    <text evidence="2">Highly expressed in roots, lower levels in stems and leaves and detected in disk florets, but not in ray florets.</text>
</comment>
<comment type="domain">
    <text evidence="1">The Asp-Asp-Xaa-Xaa-Asp/Glu (DDXXD/E) motif is important for the catalytic activity, presumably through binding to Mg(2+).</text>
</comment>
<comment type="similarity">
    <text evidence="3">Belongs to the terpene synthase family. Tpsa subfamily.</text>
</comment>
<sequence>MSLQENVIRPTANFPPSVWGDQFLTYDEREDQAGLEKVVEDLKDKVRQEILGTLDVPSQHTDLLRLIDSIQRLGIAYHFEEEIDRTLHHFYDAYGDNWTGGATSVWFRIMRQHGFFVSSDVFKSYKDKNGAFKEPLENDIVGFLELYEATYLRVPGEVILDDALVFTKGRLGEISNDPLWRNSIVSTQIIEALEQPVQKRLHRHEALRYITFYQQQASCNESLLKLAKLGFNLLQSLHKKELSQVYKWWKGFDVPTNLPYARNRMVECYFWSLSVFFEPKYSESRMFLAKVFAVETILDDTYDAFGTYEELEIFTAAVHRSSVTCLDALPKNYKLIYRIILSLYEDMEKILTKMGKAHHLNYIRNAMMEYIGCYLKEAKWANDEYTPTMEEHKEVTTVSSGYKFSLIASFAAMGDAITDETFKWALTMPPLAKACCVLCRVMDDIVTHKEEQERKHVASGIQCYMKEFDVTEQHVYDVFNAKVEDAWVEMNEESLKCKDVKRPVIMRVINLARAMDVLYKNKDHYTHVGPELINHIKSLVVDPIMA</sequence>
<name>TPS2_MATCR</name>
<organism>
    <name type="scientific">Matricaria chamomilla var. recutita</name>
    <name type="common">German chamomile</name>
    <name type="synonym">Chamomilla recutita</name>
    <dbReference type="NCBI Taxonomy" id="127986"/>
    <lineage>
        <taxon>Eukaryota</taxon>
        <taxon>Viridiplantae</taxon>
        <taxon>Streptophyta</taxon>
        <taxon>Embryophyta</taxon>
        <taxon>Tracheophyta</taxon>
        <taxon>Spermatophyta</taxon>
        <taxon>Magnoliopsida</taxon>
        <taxon>eudicotyledons</taxon>
        <taxon>Gunneridae</taxon>
        <taxon>Pentapetalae</taxon>
        <taxon>asterids</taxon>
        <taxon>campanulids</taxon>
        <taxon>Asterales</taxon>
        <taxon>Asteraceae</taxon>
        <taxon>Asteroideae</taxon>
        <taxon>Anthemideae</taxon>
        <taxon>Matricariinae</taxon>
        <taxon>Matricaria</taxon>
    </lineage>
</organism>
<feature type="chain" id="PRO_0000421926" description="Alpha-isocomene synthase">
    <location>
        <begin position="1"/>
        <end position="546"/>
    </location>
</feature>
<feature type="short sequence motif" description="DDXXD motif">
    <location>
        <begin position="299"/>
        <end position="303"/>
    </location>
</feature>
<feature type="binding site" evidence="1">
    <location>
        <position position="299"/>
    </location>
    <ligand>
        <name>Mg(2+)</name>
        <dbReference type="ChEBI" id="CHEBI:18420"/>
        <label>1</label>
    </ligand>
</feature>
<feature type="binding site" evidence="1">
    <location>
        <position position="299"/>
    </location>
    <ligand>
        <name>Mg(2+)</name>
        <dbReference type="ChEBI" id="CHEBI:18420"/>
        <label>2</label>
    </ligand>
</feature>
<feature type="binding site" evidence="1">
    <location>
        <position position="303"/>
    </location>
    <ligand>
        <name>Mg(2+)</name>
        <dbReference type="ChEBI" id="CHEBI:18420"/>
        <label>1</label>
    </ligand>
</feature>
<feature type="binding site" evidence="1">
    <location>
        <position position="303"/>
    </location>
    <ligand>
        <name>Mg(2+)</name>
        <dbReference type="ChEBI" id="CHEBI:18420"/>
        <label>2</label>
    </ligand>
</feature>
<feature type="binding site" evidence="1">
    <location>
        <position position="443"/>
    </location>
    <ligand>
        <name>Mg(2+)</name>
        <dbReference type="ChEBI" id="CHEBI:18420"/>
        <label>3</label>
    </ligand>
</feature>
<feature type="binding site" evidence="1">
    <location>
        <position position="451"/>
    </location>
    <ligand>
        <name>Mg(2+)</name>
        <dbReference type="ChEBI" id="CHEBI:18420"/>
        <label>3</label>
    </ligand>
</feature>
<reference key="1">
    <citation type="journal article" date="2012" name="BMC Plant Biol.">
        <title>The organ-specific expression of terpene synthase genes contributes to the terpene hydrocarbon composition of chamomile essential oils.</title>
        <authorList>
            <person name="Irmisch S."/>
            <person name="Krause S.T."/>
            <person name="Kunert G."/>
            <person name="Gershenzon J."/>
            <person name="Degenhardt J."/>
            <person name="Koellner T.G."/>
        </authorList>
    </citation>
    <scope>NUCLEOTIDE SEQUENCE [MRNA]</scope>
    <scope>FUNCTION</scope>
    <scope>CATALYTIC ACTIVITY</scope>
    <scope>TISSUE SPECIFICITY</scope>
    <source>
        <strain>cv. Bodegold</strain>
    </source>
</reference>
<proteinExistence type="evidence at protein level"/>
<dbReference type="EC" id="4.2.3.136"/>
<dbReference type="EMBL" id="JQ255376">
    <property type="protein sequence ID" value="AFM43735.1"/>
    <property type="molecule type" value="mRNA"/>
</dbReference>
<dbReference type="SMR" id="I6R4V5"/>
<dbReference type="KEGG" id="ag:AFM43735"/>
<dbReference type="BRENDA" id="4.2.3.136">
    <property type="organism ID" value="9733"/>
</dbReference>
<dbReference type="UniPathway" id="UPA00213"/>
<dbReference type="GO" id="GO:0000287">
    <property type="term" value="F:magnesium ion binding"/>
    <property type="evidence" value="ECO:0007669"/>
    <property type="project" value="InterPro"/>
</dbReference>
<dbReference type="GO" id="GO:0010333">
    <property type="term" value="F:terpene synthase activity"/>
    <property type="evidence" value="ECO:0007669"/>
    <property type="project" value="InterPro"/>
</dbReference>
<dbReference type="GO" id="GO:0016102">
    <property type="term" value="P:diterpenoid biosynthetic process"/>
    <property type="evidence" value="ECO:0007669"/>
    <property type="project" value="InterPro"/>
</dbReference>
<dbReference type="CDD" id="cd00684">
    <property type="entry name" value="Terpene_cyclase_plant_C1"/>
    <property type="match status" value="1"/>
</dbReference>
<dbReference type="FunFam" id="1.10.600.10:FF:000007">
    <property type="entry name" value="Isoprene synthase, chloroplastic"/>
    <property type="match status" value="1"/>
</dbReference>
<dbReference type="Gene3D" id="1.10.600.10">
    <property type="entry name" value="Farnesyl Diphosphate Synthase"/>
    <property type="match status" value="1"/>
</dbReference>
<dbReference type="Gene3D" id="1.50.10.130">
    <property type="entry name" value="Terpene synthase, N-terminal domain"/>
    <property type="match status" value="1"/>
</dbReference>
<dbReference type="InterPro" id="IPR008949">
    <property type="entry name" value="Isoprenoid_synthase_dom_sf"/>
</dbReference>
<dbReference type="InterPro" id="IPR034741">
    <property type="entry name" value="Terpene_cyclase-like_1_C"/>
</dbReference>
<dbReference type="InterPro" id="IPR044814">
    <property type="entry name" value="Terpene_cyclase_plant_C1"/>
</dbReference>
<dbReference type="InterPro" id="IPR001906">
    <property type="entry name" value="Terpene_synth_N"/>
</dbReference>
<dbReference type="InterPro" id="IPR036965">
    <property type="entry name" value="Terpene_synth_N_sf"/>
</dbReference>
<dbReference type="InterPro" id="IPR050148">
    <property type="entry name" value="Terpene_synthase-like"/>
</dbReference>
<dbReference type="InterPro" id="IPR005630">
    <property type="entry name" value="Terpene_synthase_metal-bd"/>
</dbReference>
<dbReference type="InterPro" id="IPR008930">
    <property type="entry name" value="Terpenoid_cyclase/PrenylTrfase"/>
</dbReference>
<dbReference type="PANTHER" id="PTHR31225">
    <property type="entry name" value="OS04G0344100 PROTEIN-RELATED"/>
    <property type="match status" value="1"/>
</dbReference>
<dbReference type="PANTHER" id="PTHR31225:SF235">
    <property type="entry name" value="TERPENOID CYCLASES_PROTEIN PRENYLTRANSFERASE ALPHA-ALPHA TOROID-RELATED"/>
    <property type="match status" value="1"/>
</dbReference>
<dbReference type="Pfam" id="PF01397">
    <property type="entry name" value="Terpene_synth"/>
    <property type="match status" value="1"/>
</dbReference>
<dbReference type="Pfam" id="PF03936">
    <property type="entry name" value="Terpene_synth_C"/>
    <property type="match status" value="1"/>
</dbReference>
<dbReference type="SFLD" id="SFLDS00005">
    <property type="entry name" value="Isoprenoid_Synthase_Type_I"/>
    <property type="match status" value="1"/>
</dbReference>
<dbReference type="SFLD" id="SFLDG01019">
    <property type="entry name" value="Terpene_Cyclase_Like_1_C_Termi"/>
    <property type="match status" value="1"/>
</dbReference>
<dbReference type="SUPFAM" id="SSF48239">
    <property type="entry name" value="Terpenoid cyclases/Protein prenyltransferases"/>
    <property type="match status" value="1"/>
</dbReference>
<dbReference type="SUPFAM" id="SSF48576">
    <property type="entry name" value="Terpenoid synthases"/>
    <property type="match status" value="1"/>
</dbReference>
<accession>I6R4V5</accession>
<evidence type="ECO:0000250" key="1"/>
<evidence type="ECO:0000269" key="2">
    <source>
    </source>
</evidence>
<evidence type="ECO:0000305" key="3"/>
<protein>
    <recommendedName>
        <fullName>Alpha-isocomene synthase</fullName>
        <ecNumber>4.2.3.136</ecNumber>
    </recommendedName>
    <alternativeName>
        <fullName>Terpene synthase 2</fullName>
    </alternativeName>
</protein>